<sequence>MAKRHKHYENRGSSGRGRRGGRAGHRGRGGRRRYAERNNSERAAPVWAGSGDLGNPEMVDDYYFGRQADRRLWKKDSMRMGGFRPGDMGASEQPQSHLPARKRPVTFTLARDVYDPSHNLNQLLNKQLDEGAEEEDSNSSSPSASGDDEPEGEYEPNPEPKMYRISELNDDALFFVDEQGKLPTKIPAVEVAQQETPRSVEFNDTLTVGKVQLQLRQDSNGGTFVDAPHAKRIFRDDLYGDVSEEEDEPETPKTEQLDNSKSVRTMQPPSPVPQLLSTNIGRLTLSELASESESDTEKPTAEAGAEPPKGEPGFGFLDEDHLADMSEIQVTNIRLGAAAHSYFVASPRTFGDSVARWVDHDTMVDIALELGLPEGRLHAYLRHVYEQLVPPEEPADDGADDHYGDENYDDSEEDEQDDEYENDGLIALVEHTLANDPYRNRDYNTKSLEYRGHGSRKRLIIDKESMIDETVRTLLEDKAAQRSAKRAAKRHAKEDYIAEEARMSSDLFRKYPYGFHIENIIDELEAFLVSPRAALEFPPLDPHGRRTLKNLACAFALICKQVGQSTHTRVLVQKGGRYEPDYDAVNRIRRQRRVFMRVDVRRPRDDITPREPRAKFHVREGAIVGGDAPTIGQDNVGRRLLEKLGWTHGEGLGVHGNKGISEPLMARVKKNRSGLRYTE</sequence>
<accession>Q75E62</accession>
<dbReference type="EMBL" id="AE016815">
    <property type="protein sequence ID" value="AAS50579.1"/>
    <property type="molecule type" value="Genomic_DNA"/>
</dbReference>
<dbReference type="RefSeq" id="NP_982755.1">
    <property type="nucleotide sequence ID" value="NM_208108.1"/>
</dbReference>
<dbReference type="FunCoup" id="Q75E62">
    <property type="interactions" value="301"/>
</dbReference>
<dbReference type="STRING" id="284811.Q75E62"/>
<dbReference type="EnsemblFungi" id="AAS50579">
    <property type="protein sequence ID" value="AAS50579"/>
    <property type="gene ID" value="AGOS_ABL192C"/>
</dbReference>
<dbReference type="GeneID" id="4618834"/>
<dbReference type="KEGG" id="ago:AGOS_ABL192C"/>
<dbReference type="eggNOG" id="KOG0154">
    <property type="taxonomic scope" value="Eukaryota"/>
</dbReference>
<dbReference type="HOGENOM" id="CLU_021974_1_0_1"/>
<dbReference type="InParanoid" id="Q75E62"/>
<dbReference type="OMA" id="PVFMRID"/>
<dbReference type="OrthoDB" id="21470at2759"/>
<dbReference type="Proteomes" id="UP000000591">
    <property type="component" value="Chromosome II"/>
</dbReference>
<dbReference type="GO" id="GO:0030686">
    <property type="term" value="C:90S preribosome"/>
    <property type="evidence" value="ECO:0007669"/>
    <property type="project" value="EnsemblFungi"/>
</dbReference>
<dbReference type="GO" id="GO:0005737">
    <property type="term" value="C:cytoplasm"/>
    <property type="evidence" value="ECO:0007669"/>
    <property type="project" value="UniProtKB-SubCell"/>
</dbReference>
<dbReference type="GO" id="GO:0005634">
    <property type="term" value="C:nucleus"/>
    <property type="evidence" value="ECO:0000318"/>
    <property type="project" value="GO_Central"/>
</dbReference>
<dbReference type="GO" id="GO:0030687">
    <property type="term" value="C:preribosome, large subunit precursor"/>
    <property type="evidence" value="ECO:0007669"/>
    <property type="project" value="EnsemblFungi"/>
</dbReference>
<dbReference type="GO" id="GO:0030688">
    <property type="term" value="C:preribosome, small subunit precursor"/>
    <property type="evidence" value="ECO:0007669"/>
    <property type="project" value="EnsemblFungi"/>
</dbReference>
<dbReference type="GO" id="GO:0008047">
    <property type="term" value="F:enzyme activator activity"/>
    <property type="evidence" value="ECO:0007669"/>
    <property type="project" value="EnsemblFungi"/>
</dbReference>
<dbReference type="GO" id="GO:0003676">
    <property type="term" value="F:nucleic acid binding"/>
    <property type="evidence" value="ECO:0007669"/>
    <property type="project" value="InterPro"/>
</dbReference>
<dbReference type="GO" id="GO:0030490">
    <property type="term" value="P:maturation of SSU-rRNA"/>
    <property type="evidence" value="ECO:0007669"/>
    <property type="project" value="EnsemblFungi"/>
</dbReference>
<dbReference type="GO" id="GO:0000398">
    <property type="term" value="P:mRNA splicing, via spliceosome"/>
    <property type="evidence" value="ECO:0007669"/>
    <property type="project" value="EnsemblFungi"/>
</dbReference>
<dbReference type="CDD" id="cd02646">
    <property type="entry name" value="R3H_G-patch"/>
    <property type="match status" value="1"/>
</dbReference>
<dbReference type="InterPro" id="IPR000467">
    <property type="entry name" value="G_patch_dom"/>
</dbReference>
<dbReference type="InterPro" id="IPR034082">
    <property type="entry name" value="R3H_G-patch"/>
</dbReference>
<dbReference type="InterPro" id="IPR051189">
    <property type="entry name" value="Splicing_assoc_domain"/>
</dbReference>
<dbReference type="PANTHER" id="PTHR14195">
    <property type="entry name" value="G PATCH DOMAIN CONTAINING PROTEIN 2"/>
    <property type="match status" value="1"/>
</dbReference>
<dbReference type="Pfam" id="PF01585">
    <property type="entry name" value="G-patch"/>
    <property type="match status" value="1"/>
</dbReference>
<dbReference type="SMART" id="SM00443">
    <property type="entry name" value="G_patch"/>
    <property type="match status" value="1"/>
</dbReference>
<dbReference type="PROSITE" id="PS50174">
    <property type="entry name" value="G_PATCH"/>
    <property type="match status" value="1"/>
</dbReference>
<organism>
    <name type="scientific">Eremothecium gossypii (strain ATCC 10895 / CBS 109.51 / FGSC 9923 / NRRL Y-1056)</name>
    <name type="common">Yeast</name>
    <name type="synonym">Ashbya gossypii</name>
    <dbReference type="NCBI Taxonomy" id="284811"/>
    <lineage>
        <taxon>Eukaryota</taxon>
        <taxon>Fungi</taxon>
        <taxon>Dikarya</taxon>
        <taxon>Ascomycota</taxon>
        <taxon>Saccharomycotina</taxon>
        <taxon>Saccharomycetes</taxon>
        <taxon>Saccharomycetales</taxon>
        <taxon>Saccharomycetaceae</taxon>
        <taxon>Eremothecium</taxon>
    </lineage>
</organism>
<reference key="1">
    <citation type="journal article" date="2004" name="Science">
        <title>The Ashbya gossypii genome as a tool for mapping the ancient Saccharomyces cerevisiae genome.</title>
        <authorList>
            <person name="Dietrich F.S."/>
            <person name="Voegeli S."/>
            <person name="Brachat S."/>
            <person name="Lerch A."/>
            <person name="Gates K."/>
            <person name="Steiner S."/>
            <person name="Mohr C."/>
            <person name="Poehlmann R."/>
            <person name="Luedi P."/>
            <person name="Choi S."/>
            <person name="Wing R.A."/>
            <person name="Flavier A."/>
            <person name="Gaffney T.D."/>
            <person name="Philippsen P."/>
        </authorList>
    </citation>
    <scope>NUCLEOTIDE SEQUENCE [LARGE SCALE GENOMIC DNA]</scope>
    <source>
        <strain>ATCC 10895 / CBS 109.51 / FGSC 9923 / NRRL Y-1056</strain>
    </source>
</reference>
<reference key="2">
    <citation type="journal article" date="2013" name="G3 (Bethesda)">
        <title>Genomes of Ashbya fungi isolated from insects reveal four mating-type loci, numerous translocations, lack of transposons, and distinct gene duplications.</title>
        <authorList>
            <person name="Dietrich F.S."/>
            <person name="Voegeli S."/>
            <person name="Kuo S."/>
            <person name="Philippsen P."/>
        </authorList>
    </citation>
    <scope>GENOME REANNOTATION</scope>
    <source>
        <strain>ATCC 10895 / CBS 109.51 / FGSC 9923 / NRRL Y-1056</strain>
    </source>
</reference>
<protein>
    <recommendedName>
        <fullName>Protein SQS1</fullName>
    </recommendedName>
</protein>
<proteinExistence type="inferred from homology"/>
<feature type="chain" id="PRO_0000324993" description="Protein SQS1">
    <location>
        <begin position="1"/>
        <end position="679"/>
    </location>
</feature>
<feature type="domain" description="R3H">
    <location>
        <begin position="514"/>
        <end position="576"/>
    </location>
</feature>
<feature type="domain" description="G-patch" evidence="2">
    <location>
        <begin position="633"/>
        <end position="679"/>
    </location>
</feature>
<feature type="region of interest" description="Disordered" evidence="3">
    <location>
        <begin position="1"/>
        <end position="40"/>
    </location>
</feature>
<feature type="region of interest" description="Disordered" evidence="3">
    <location>
        <begin position="76"/>
        <end position="161"/>
    </location>
</feature>
<feature type="region of interest" description="Disordered" evidence="3">
    <location>
        <begin position="242"/>
        <end position="315"/>
    </location>
</feature>
<feature type="region of interest" description="Disordered" evidence="3">
    <location>
        <begin position="391"/>
        <end position="419"/>
    </location>
</feature>
<feature type="compositionally biased region" description="Basic residues" evidence="3">
    <location>
        <begin position="16"/>
        <end position="32"/>
    </location>
</feature>
<feature type="compositionally biased region" description="Acidic residues" evidence="3">
    <location>
        <begin position="146"/>
        <end position="156"/>
    </location>
</feature>
<feature type="compositionally biased region" description="Acidic residues" evidence="3">
    <location>
        <begin position="406"/>
        <end position="419"/>
    </location>
</feature>
<evidence type="ECO:0000250" key="1"/>
<evidence type="ECO:0000255" key="2">
    <source>
        <dbReference type="PROSITE-ProRule" id="PRU00092"/>
    </source>
</evidence>
<evidence type="ECO:0000256" key="3">
    <source>
        <dbReference type="SAM" id="MobiDB-lite"/>
    </source>
</evidence>
<evidence type="ECO:0000305" key="4"/>
<gene>
    <name type="primary">SQS1</name>
    <name type="ordered locus">ABL192C</name>
</gene>
<keyword id="KW-0963">Cytoplasm</keyword>
<keyword id="KW-0507">mRNA processing</keyword>
<keyword id="KW-0508">mRNA splicing</keyword>
<keyword id="KW-0539">Nucleus</keyword>
<keyword id="KW-1185">Reference proteome</keyword>
<comment type="function">
    <text evidence="1">May be involved in splicing.</text>
</comment>
<comment type="subcellular location">
    <subcellularLocation>
        <location evidence="1">Cytoplasm</location>
    </subcellularLocation>
    <subcellularLocation>
        <location evidence="1">Nucleus</location>
    </subcellularLocation>
</comment>
<comment type="similarity">
    <text evidence="4">Belongs to the SQS1 family.</text>
</comment>
<name>SQS1_EREGS</name>